<keyword id="KW-0998">Cell outer membrane</keyword>
<keyword id="KW-0143">Chaperone</keyword>
<keyword id="KW-0449">Lipoprotein</keyword>
<keyword id="KW-0472">Membrane</keyword>
<keyword id="KW-0564">Palmitate</keyword>
<keyword id="KW-0653">Protein transport</keyword>
<keyword id="KW-0732">Signal</keyword>
<keyword id="KW-0813">Transport</keyword>
<accession>B0BP58</accession>
<comment type="function">
    <text evidence="1">Plays a critical role in the incorporation of lipoproteins in the outer membrane after they are released by the LolA protein.</text>
</comment>
<comment type="subunit">
    <text evidence="1">Monomer.</text>
</comment>
<comment type="subcellular location">
    <subcellularLocation>
        <location evidence="1">Cell outer membrane</location>
        <topology evidence="1">Lipid-anchor</topology>
    </subcellularLocation>
</comment>
<comment type="similarity">
    <text evidence="1">Belongs to the LolB family.</text>
</comment>
<dbReference type="EMBL" id="CP000687">
    <property type="protein sequence ID" value="ABY69343.1"/>
    <property type="molecule type" value="Genomic_DNA"/>
</dbReference>
<dbReference type="RefSeq" id="WP_005597216.1">
    <property type="nucleotide sequence ID" value="NC_010278.1"/>
</dbReference>
<dbReference type="SMR" id="B0BP58"/>
<dbReference type="GeneID" id="48598963"/>
<dbReference type="KEGG" id="apj:APJL_0780"/>
<dbReference type="HOGENOM" id="CLU_092816_1_1_6"/>
<dbReference type="Proteomes" id="UP000008547">
    <property type="component" value="Chromosome"/>
</dbReference>
<dbReference type="GO" id="GO:0009279">
    <property type="term" value="C:cell outer membrane"/>
    <property type="evidence" value="ECO:0007669"/>
    <property type="project" value="UniProtKB-SubCell"/>
</dbReference>
<dbReference type="GO" id="GO:0044874">
    <property type="term" value="P:lipoprotein localization to outer membrane"/>
    <property type="evidence" value="ECO:0007669"/>
    <property type="project" value="UniProtKB-UniRule"/>
</dbReference>
<dbReference type="GO" id="GO:0015031">
    <property type="term" value="P:protein transport"/>
    <property type="evidence" value="ECO:0007669"/>
    <property type="project" value="UniProtKB-KW"/>
</dbReference>
<dbReference type="CDD" id="cd16326">
    <property type="entry name" value="LolB"/>
    <property type="match status" value="1"/>
</dbReference>
<dbReference type="Gene3D" id="2.50.20.10">
    <property type="entry name" value="Lipoprotein localisation LolA/LolB/LppX"/>
    <property type="match status" value="1"/>
</dbReference>
<dbReference type="HAMAP" id="MF_00233">
    <property type="entry name" value="LolB"/>
    <property type="match status" value="1"/>
</dbReference>
<dbReference type="InterPro" id="IPR029046">
    <property type="entry name" value="LolA/LolB/LppX"/>
</dbReference>
<dbReference type="InterPro" id="IPR004565">
    <property type="entry name" value="OM_lipoprot_LolB"/>
</dbReference>
<dbReference type="NCBIfam" id="TIGR00548">
    <property type="entry name" value="lolB"/>
    <property type="match status" value="1"/>
</dbReference>
<dbReference type="Pfam" id="PF03550">
    <property type="entry name" value="LolB"/>
    <property type="match status" value="1"/>
</dbReference>
<dbReference type="SUPFAM" id="SSF89392">
    <property type="entry name" value="Prokaryotic lipoproteins and lipoprotein localization factors"/>
    <property type="match status" value="1"/>
</dbReference>
<dbReference type="PROSITE" id="PS51257">
    <property type="entry name" value="PROKAR_LIPOPROTEIN"/>
    <property type="match status" value="1"/>
</dbReference>
<evidence type="ECO:0000255" key="1">
    <source>
        <dbReference type="HAMAP-Rule" id="MF_00233"/>
    </source>
</evidence>
<feature type="signal peptide" evidence="1">
    <location>
        <begin position="1"/>
        <end position="18"/>
    </location>
</feature>
<feature type="chain" id="PRO_0000336592" description="Outer-membrane lipoprotein LolB">
    <location>
        <begin position="19"/>
        <end position="210"/>
    </location>
</feature>
<feature type="lipid moiety-binding region" description="N-palmitoyl cysteine" evidence="1">
    <location>
        <position position="19"/>
    </location>
</feature>
<feature type="lipid moiety-binding region" description="S-diacylglycerol cysteine" evidence="1">
    <location>
        <position position="19"/>
    </location>
</feature>
<sequence length="210" mass="24155">MKKFTKILSLSTLLFLAGCQSVLNEPTEVQQPGVQIPHNDAQWQQHLQQLAKIQSYSAKGQIGYISPEERFSSHFDWQYRTPTNFGLELSSNLSSKSLKLQRNARGLTISDSEGNSRSDRDMDSLMKEIIGVAFPIDQFAYWLKGQPEQDGNYIVNDKRQLSQFSYHINGEVWKASYVQYHEDRQPNLPKLIVLENGSQTLKIRVDQWAF</sequence>
<proteinExistence type="inferred from homology"/>
<gene>
    <name evidence="1" type="primary">lolB</name>
    <name type="ordered locus">APJL_0780</name>
</gene>
<name>LOLB_ACTPJ</name>
<reference key="1">
    <citation type="journal article" date="2008" name="PLoS ONE">
        <title>Genome biology of Actinobacillus pleuropneumoniae JL03, an isolate of serotype 3 prevalent in China.</title>
        <authorList>
            <person name="Xu Z."/>
            <person name="Zhou Y."/>
            <person name="Li L."/>
            <person name="Zhou R."/>
            <person name="Xiao S."/>
            <person name="Wan Y."/>
            <person name="Zhang S."/>
            <person name="Wang K."/>
            <person name="Li W."/>
            <person name="Li L."/>
            <person name="Jin H."/>
            <person name="Kang M."/>
            <person name="Dalai B."/>
            <person name="Li T."/>
            <person name="Liu L."/>
            <person name="Cheng Y."/>
            <person name="Zhang L."/>
            <person name="Xu T."/>
            <person name="Zheng H."/>
            <person name="Pu S."/>
            <person name="Wang B."/>
            <person name="Gu W."/>
            <person name="Zhang X.L."/>
            <person name="Zhu G.-F."/>
            <person name="Wang S."/>
            <person name="Zhao G.-P."/>
            <person name="Chen H."/>
        </authorList>
    </citation>
    <scope>NUCLEOTIDE SEQUENCE [LARGE SCALE GENOMIC DNA]</scope>
    <source>
        <strain>JL03</strain>
    </source>
</reference>
<organism>
    <name type="scientific">Actinobacillus pleuropneumoniae serotype 3 (strain JL03)</name>
    <dbReference type="NCBI Taxonomy" id="434271"/>
    <lineage>
        <taxon>Bacteria</taxon>
        <taxon>Pseudomonadati</taxon>
        <taxon>Pseudomonadota</taxon>
        <taxon>Gammaproteobacteria</taxon>
        <taxon>Pasteurellales</taxon>
        <taxon>Pasteurellaceae</taxon>
        <taxon>Actinobacillus</taxon>
    </lineage>
</organism>
<protein>
    <recommendedName>
        <fullName evidence="1">Outer-membrane lipoprotein LolB</fullName>
    </recommendedName>
</protein>